<dbReference type="EC" id="2.3.1.275" evidence="1"/>
<dbReference type="EMBL" id="AL935263">
    <property type="protein sequence ID" value="CCC79116.1"/>
    <property type="molecule type" value="Genomic_DNA"/>
</dbReference>
<dbReference type="RefSeq" id="WP_003644419.1">
    <property type="nucleotide sequence ID" value="NC_004567.2"/>
</dbReference>
<dbReference type="RefSeq" id="YP_004889630.1">
    <property type="nucleotide sequence ID" value="NC_004567.2"/>
</dbReference>
<dbReference type="SMR" id="Q88W28"/>
<dbReference type="STRING" id="220668.lp_1842"/>
<dbReference type="EnsemblBacteria" id="CCC79116">
    <property type="protein sequence ID" value="CCC79116"/>
    <property type="gene ID" value="lp_1842"/>
</dbReference>
<dbReference type="GeneID" id="79807393"/>
<dbReference type="KEGG" id="lpl:lp_1842"/>
<dbReference type="PATRIC" id="fig|220668.9.peg.1553"/>
<dbReference type="eggNOG" id="COG0344">
    <property type="taxonomic scope" value="Bacteria"/>
</dbReference>
<dbReference type="HOGENOM" id="CLU_081254_4_0_9"/>
<dbReference type="OrthoDB" id="9777124at2"/>
<dbReference type="PhylomeDB" id="Q88W28"/>
<dbReference type="UniPathway" id="UPA00085"/>
<dbReference type="Proteomes" id="UP000000432">
    <property type="component" value="Chromosome"/>
</dbReference>
<dbReference type="GO" id="GO:0005886">
    <property type="term" value="C:plasma membrane"/>
    <property type="evidence" value="ECO:0007669"/>
    <property type="project" value="UniProtKB-SubCell"/>
</dbReference>
<dbReference type="GO" id="GO:0043772">
    <property type="term" value="F:acyl-phosphate glycerol-3-phosphate acyltransferase activity"/>
    <property type="evidence" value="ECO:0007669"/>
    <property type="project" value="UniProtKB-UniRule"/>
</dbReference>
<dbReference type="GO" id="GO:0008654">
    <property type="term" value="P:phospholipid biosynthetic process"/>
    <property type="evidence" value="ECO:0007669"/>
    <property type="project" value="UniProtKB-UniRule"/>
</dbReference>
<dbReference type="HAMAP" id="MF_01043">
    <property type="entry name" value="PlsY"/>
    <property type="match status" value="1"/>
</dbReference>
<dbReference type="InterPro" id="IPR003811">
    <property type="entry name" value="G3P_acylTferase_PlsY"/>
</dbReference>
<dbReference type="NCBIfam" id="TIGR00023">
    <property type="entry name" value="glycerol-3-phosphate 1-O-acyltransferase PlsY"/>
    <property type="match status" value="1"/>
</dbReference>
<dbReference type="PANTHER" id="PTHR30309:SF0">
    <property type="entry name" value="GLYCEROL-3-PHOSPHATE ACYLTRANSFERASE-RELATED"/>
    <property type="match status" value="1"/>
</dbReference>
<dbReference type="PANTHER" id="PTHR30309">
    <property type="entry name" value="INNER MEMBRANE PROTEIN YGIH"/>
    <property type="match status" value="1"/>
</dbReference>
<dbReference type="Pfam" id="PF02660">
    <property type="entry name" value="G3P_acyltransf"/>
    <property type="match status" value="1"/>
</dbReference>
<dbReference type="SMART" id="SM01207">
    <property type="entry name" value="G3P_acyltransf"/>
    <property type="match status" value="1"/>
</dbReference>
<organism>
    <name type="scientific">Lactiplantibacillus plantarum (strain ATCC BAA-793 / NCIMB 8826 / WCFS1)</name>
    <name type="common">Lactobacillus plantarum</name>
    <dbReference type="NCBI Taxonomy" id="220668"/>
    <lineage>
        <taxon>Bacteria</taxon>
        <taxon>Bacillati</taxon>
        <taxon>Bacillota</taxon>
        <taxon>Bacilli</taxon>
        <taxon>Lactobacillales</taxon>
        <taxon>Lactobacillaceae</taxon>
        <taxon>Lactiplantibacillus</taxon>
    </lineage>
</organism>
<reference key="1">
    <citation type="journal article" date="2003" name="Proc. Natl. Acad. Sci. U.S.A.">
        <title>Complete genome sequence of Lactobacillus plantarum WCFS1.</title>
        <authorList>
            <person name="Kleerebezem M."/>
            <person name="Boekhorst J."/>
            <person name="van Kranenburg R."/>
            <person name="Molenaar D."/>
            <person name="Kuipers O.P."/>
            <person name="Leer R."/>
            <person name="Tarchini R."/>
            <person name="Peters S.A."/>
            <person name="Sandbrink H.M."/>
            <person name="Fiers M.W.E.J."/>
            <person name="Stiekema W."/>
            <person name="Klein Lankhorst R.M."/>
            <person name="Bron P.A."/>
            <person name="Hoffer S.M."/>
            <person name="Nierop Groot M.N."/>
            <person name="Kerkhoven R."/>
            <person name="De Vries M."/>
            <person name="Ursing B."/>
            <person name="De Vos W.M."/>
            <person name="Siezen R.J."/>
        </authorList>
    </citation>
    <scope>NUCLEOTIDE SEQUENCE [LARGE SCALE GENOMIC DNA]</scope>
    <source>
        <strain>ATCC BAA-793 / NCIMB 8826 / WCFS1</strain>
    </source>
</reference>
<reference key="2">
    <citation type="journal article" date="2012" name="J. Bacteriol.">
        <title>Complete resequencing and reannotation of the Lactobacillus plantarum WCFS1 genome.</title>
        <authorList>
            <person name="Siezen R.J."/>
            <person name="Francke C."/>
            <person name="Renckens B."/>
            <person name="Boekhorst J."/>
            <person name="Wels M."/>
            <person name="Kleerebezem M."/>
            <person name="van Hijum S.A."/>
        </authorList>
    </citation>
    <scope>NUCLEOTIDE SEQUENCE [LARGE SCALE GENOMIC DNA]</scope>
    <scope>GENOME REANNOTATION</scope>
    <source>
        <strain>ATCC BAA-793 / NCIMB 8826 / WCFS1</strain>
    </source>
</reference>
<proteinExistence type="inferred from homology"/>
<protein>
    <recommendedName>
        <fullName evidence="1">Glycerol-3-phosphate acyltransferase</fullName>
    </recommendedName>
    <alternativeName>
        <fullName evidence="1">Acyl-PO4 G3P acyltransferase</fullName>
    </alternativeName>
    <alternativeName>
        <fullName evidence="1">Acyl-phosphate--glycerol-3-phosphate acyltransferase</fullName>
    </alternativeName>
    <alternativeName>
        <fullName evidence="1">G3P acyltransferase</fullName>
        <shortName evidence="1">GPAT</shortName>
        <ecNumber evidence="1">2.3.1.275</ecNumber>
    </alternativeName>
    <alternativeName>
        <fullName evidence="1">Lysophosphatidic acid synthase</fullName>
        <shortName evidence="1">LPA synthase</shortName>
    </alternativeName>
</protein>
<keyword id="KW-1003">Cell membrane</keyword>
<keyword id="KW-0444">Lipid biosynthesis</keyword>
<keyword id="KW-0443">Lipid metabolism</keyword>
<keyword id="KW-0472">Membrane</keyword>
<keyword id="KW-0594">Phospholipid biosynthesis</keyword>
<keyword id="KW-1208">Phospholipid metabolism</keyword>
<keyword id="KW-1185">Reference proteome</keyword>
<keyword id="KW-0808">Transferase</keyword>
<keyword id="KW-0812">Transmembrane</keyword>
<keyword id="KW-1133">Transmembrane helix</keyword>
<accession>Q88W28</accession>
<accession>F9UPH7</accession>
<gene>
    <name evidence="1" type="primary">plsY</name>
    <name type="ordered locus">lp_1842</name>
</gene>
<comment type="function">
    <text evidence="1">Catalyzes the transfer of an acyl group from acyl-phosphate (acyl-PO(4)) to glycerol-3-phosphate (G3P) to form lysophosphatidic acid (LPA). This enzyme utilizes acyl-phosphate as fatty acyl donor, but not acyl-CoA or acyl-ACP.</text>
</comment>
<comment type="catalytic activity">
    <reaction evidence="1">
        <text>an acyl phosphate + sn-glycerol 3-phosphate = a 1-acyl-sn-glycero-3-phosphate + phosphate</text>
        <dbReference type="Rhea" id="RHEA:34075"/>
        <dbReference type="ChEBI" id="CHEBI:43474"/>
        <dbReference type="ChEBI" id="CHEBI:57597"/>
        <dbReference type="ChEBI" id="CHEBI:57970"/>
        <dbReference type="ChEBI" id="CHEBI:59918"/>
        <dbReference type="EC" id="2.3.1.275"/>
    </reaction>
</comment>
<comment type="pathway">
    <text evidence="1">Lipid metabolism; phospholipid metabolism.</text>
</comment>
<comment type="subunit">
    <text evidence="1">Probably interacts with PlsX.</text>
</comment>
<comment type="subcellular location">
    <subcellularLocation>
        <location evidence="1">Cell membrane</location>
        <topology evidence="1">Multi-pass membrane protein</topology>
    </subcellularLocation>
</comment>
<comment type="similarity">
    <text evidence="1">Belongs to the PlsY family.</text>
</comment>
<sequence>MKIIIMLIIAYLIGAIPSGVIIGKFFFHTDIRQAGSGNIGTTNTYRVLGPTAGTIVMVMDILKGTIAALQPTLLFHMNNRYTLLIGLAAILGHTFSIYIGFKGGKAVATSAGILLAYNWEFFLIASAIMLLLVYTTSMVSVASMTAFPIVTLIAIFYYQDWLLSLVAFALTLFIFYRHRSNIARIKNGTESLVHFGLGWRRQQRANRK</sequence>
<evidence type="ECO:0000255" key="1">
    <source>
        <dbReference type="HAMAP-Rule" id="MF_01043"/>
    </source>
</evidence>
<name>PLSY_LACPL</name>
<feature type="chain" id="PRO_0000188388" description="Glycerol-3-phosphate acyltransferase">
    <location>
        <begin position="1"/>
        <end position="208"/>
    </location>
</feature>
<feature type="transmembrane region" description="Helical" evidence="1">
    <location>
        <begin position="3"/>
        <end position="23"/>
    </location>
</feature>
<feature type="transmembrane region" description="Helical" evidence="1">
    <location>
        <begin position="55"/>
        <end position="75"/>
    </location>
</feature>
<feature type="transmembrane region" description="Helical" evidence="1">
    <location>
        <begin position="81"/>
        <end position="101"/>
    </location>
</feature>
<feature type="transmembrane region" description="Helical" evidence="1">
    <location>
        <begin position="113"/>
        <end position="133"/>
    </location>
</feature>
<feature type="transmembrane region" description="Helical" evidence="1">
    <location>
        <begin position="155"/>
        <end position="175"/>
    </location>
</feature>